<comment type="function">
    <text evidence="1">The RuvA-RuvB-RuvC complex processes Holliday junction (HJ) DNA during genetic recombination and DNA repair, while the RuvA-RuvB complex plays an important role in the rescue of blocked DNA replication forks via replication fork reversal (RFR). RuvA specifically binds to HJ cruciform DNA, conferring on it an open structure. The RuvB hexamer acts as an ATP-dependent pump, pulling dsDNA into and through the RuvAB complex. HJ branch migration allows RuvC to scan DNA until it finds its consensus sequence, where it cleaves and resolves the cruciform DNA.</text>
</comment>
<comment type="subunit">
    <text evidence="1">Homotetramer. Forms an RuvA(8)-RuvB(12)-Holliday junction (HJ) complex. HJ DNA is sandwiched between 2 RuvA tetramers; dsDNA enters through RuvA and exits via RuvB. An RuvB hexamer assembles on each DNA strand where it exits the tetramer. Each RuvB hexamer is contacted by two RuvA subunits (via domain III) on 2 adjacent RuvB subunits; this complex drives branch migration. In the full resolvosome a probable DNA-RuvA(4)-RuvB(12)-RuvC(2) complex forms which resolves the HJ.</text>
</comment>
<comment type="subcellular location">
    <subcellularLocation>
        <location evidence="1">Cytoplasm</location>
    </subcellularLocation>
</comment>
<comment type="domain">
    <text evidence="1">Has three domains with a flexible linker between the domains II and III and assumes an 'L' shape. Domain III is highly mobile and contacts RuvB.</text>
</comment>
<comment type="similarity">
    <text evidence="1">Belongs to the RuvA family.</text>
</comment>
<name>RUVA_NITV4</name>
<proteinExistence type="inferred from homology"/>
<protein>
    <recommendedName>
        <fullName evidence="1">Holliday junction branch migration complex subunit RuvA</fullName>
    </recommendedName>
</protein>
<evidence type="ECO:0000255" key="1">
    <source>
        <dbReference type="HAMAP-Rule" id="MF_00031"/>
    </source>
</evidence>
<accession>A1VC43</accession>
<gene>
    <name evidence="1" type="primary">ruvA</name>
    <name type="ordered locus">Dvul_0988</name>
</gene>
<reference key="1">
    <citation type="journal article" date="2009" name="Environ. Microbiol.">
        <title>Contribution of mobile genetic elements to Desulfovibrio vulgaris genome plasticity.</title>
        <authorList>
            <person name="Walker C.B."/>
            <person name="Stolyar S."/>
            <person name="Chivian D."/>
            <person name="Pinel N."/>
            <person name="Gabster J.A."/>
            <person name="Dehal P.S."/>
            <person name="He Z."/>
            <person name="Yang Z.K."/>
            <person name="Yen H.C."/>
            <person name="Zhou J."/>
            <person name="Wall J.D."/>
            <person name="Hazen T.C."/>
            <person name="Arkin A.P."/>
            <person name="Stahl D.A."/>
        </authorList>
    </citation>
    <scope>NUCLEOTIDE SEQUENCE [LARGE SCALE GENOMIC DNA]</scope>
    <source>
        <strain>DP4</strain>
    </source>
</reference>
<keyword id="KW-0963">Cytoplasm</keyword>
<keyword id="KW-0227">DNA damage</keyword>
<keyword id="KW-0233">DNA recombination</keyword>
<keyword id="KW-0234">DNA repair</keyword>
<keyword id="KW-0238">DNA-binding</keyword>
<sequence length="202" mass="21542">MIAYVEGRLAEVAGNACVVVTDGGVGYEVFVPGHTLARLPDKGGRVSFFISTEVREDALELYGFATWDERQTFIVLTSISKVGAKTGLAILSQFRPDDLRRLVVEDDVLALTRVSGIGKKTAQHIFLELKYKLKVEDLPAAAPLVTGGAPGGVFRDALAGLANLGYGEEEASHVLKEVLHGEPDLDVGGALRAALRALARGR</sequence>
<organism>
    <name type="scientific">Nitratidesulfovibrio vulgaris (strain DP4)</name>
    <name type="common">Desulfovibrio vulgaris</name>
    <dbReference type="NCBI Taxonomy" id="391774"/>
    <lineage>
        <taxon>Bacteria</taxon>
        <taxon>Pseudomonadati</taxon>
        <taxon>Thermodesulfobacteriota</taxon>
        <taxon>Desulfovibrionia</taxon>
        <taxon>Desulfovibrionales</taxon>
        <taxon>Desulfovibrionaceae</taxon>
        <taxon>Nitratidesulfovibrio</taxon>
    </lineage>
</organism>
<dbReference type="EMBL" id="CP000527">
    <property type="protein sequence ID" value="ABM28009.1"/>
    <property type="molecule type" value="Genomic_DNA"/>
</dbReference>
<dbReference type="RefSeq" id="WP_011791972.1">
    <property type="nucleotide sequence ID" value="NC_008751.1"/>
</dbReference>
<dbReference type="SMR" id="A1VC43"/>
<dbReference type="KEGG" id="dvl:Dvul_0988"/>
<dbReference type="HOGENOM" id="CLU_087936_0_0_7"/>
<dbReference type="Proteomes" id="UP000009173">
    <property type="component" value="Chromosome"/>
</dbReference>
<dbReference type="GO" id="GO:0005737">
    <property type="term" value="C:cytoplasm"/>
    <property type="evidence" value="ECO:0007669"/>
    <property type="project" value="UniProtKB-SubCell"/>
</dbReference>
<dbReference type="GO" id="GO:0009379">
    <property type="term" value="C:Holliday junction helicase complex"/>
    <property type="evidence" value="ECO:0007669"/>
    <property type="project" value="InterPro"/>
</dbReference>
<dbReference type="GO" id="GO:0048476">
    <property type="term" value="C:Holliday junction resolvase complex"/>
    <property type="evidence" value="ECO:0007669"/>
    <property type="project" value="UniProtKB-UniRule"/>
</dbReference>
<dbReference type="GO" id="GO:0005524">
    <property type="term" value="F:ATP binding"/>
    <property type="evidence" value="ECO:0007669"/>
    <property type="project" value="InterPro"/>
</dbReference>
<dbReference type="GO" id="GO:0000400">
    <property type="term" value="F:four-way junction DNA binding"/>
    <property type="evidence" value="ECO:0007669"/>
    <property type="project" value="UniProtKB-UniRule"/>
</dbReference>
<dbReference type="GO" id="GO:0009378">
    <property type="term" value="F:four-way junction helicase activity"/>
    <property type="evidence" value="ECO:0007669"/>
    <property type="project" value="InterPro"/>
</dbReference>
<dbReference type="GO" id="GO:0006310">
    <property type="term" value="P:DNA recombination"/>
    <property type="evidence" value="ECO:0007669"/>
    <property type="project" value="UniProtKB-UniRule"/>
</dbReference>
<dbReference type="GO" id="GO:0006281">
    <property type="term" value="P:DNA repair"/>
    <property type="evidence" value="ECO:0007669"/>
    <property type="project" value="UniProtKB-UniRule"/>
</dbReference>
<dbReference type="CDD" id="cd14332">
    <property type="entry name" value="UBA_RuvA_C"/>
    <property type="match status" value="1"/>
</dbReference>
<dbReference type="Gene3D" id="1.10.150.20">
    <property type="entry name" value="5' to 3' exonuclease, C-terminal subdomain"/>
    <property type="match status" value="1"/>
</dbReference>
<dbReference type="Gene3D" id="1.10.8.10">
    <property type="entry name" value="DNA helicase RuvA subunit, C-terminal domain"/>
    <property type="match status" value="1"/>
</dbReference>
<dbReference type="Gene3D" id="2.40.50.140">
    <property type="entry name" value="Nucleic acid-binding proteins"/>
    <property type="match status" value="1"/>
</dbReference>
<dbReference type="HAMAP" id="MF_00031">
    <property type="entry name" value="DNA_HJ_migration_RuvA"/>
    <property type="match status" value="1"/>
</dbReference>
<dbReference type="InterPro" id="IPR013849">
    <property type="entry name" value="DNA_helicase_Holl-junc_RuvA_I"/>
</dbReference>
<dbReference type="InterPro" id="IPR012340">
    <property type="entry name" value="NA-bd_OB-fold"/>
</dbReference>
<dbReference type="InterPro" id="IPR000085">
    <property type="entry name" value="RuvA"/>
</dbReference>
<dbReference type="InterPro" id="IPR010994">
    <property type="entry name" value="RuvA_2-like"/>
</dbReference>
<dbReference type="InterPro" id="IPR011114">
    <property type="entry name" value="RuvA_C"/>
</dbReference>
<dbReference type="InterPro" id="IPR036267">
    <property type="entry name" value="RuvA_C_sf"/>
</dbReference>
<dbReference type="NCBIfam" id="TIGR00084">
    <property type="entry name" value="ruvA"/>
    <property type="match status" value="1"/>
</dbReference>
<dbReference type="Pfam" id="PF14520">
    <property type="entry name" value="HHH_5"/>
    <property type="match status" value="1"/>
</dbReference>
<dbReference type="Pfam" id="PF07499">
    <property type="entry name" value="RuvA_C"/>
    <property type="match status" value="1"/>
</dbReference>
<dbReference type="Pfam" id="PF01330">
    <property type="entry name" value="RuvA_N"/>
    <property type="match status" value="1"/>
</dbReference>
<dbReference type="SUPFAM" id="SSF46929">
    <property type="entry name" value="DNA helicase RuvA subunit, C-terminal domain"/>
    <property type="match status" value="1"/>
</dbReference>
<dbReference type="SUPFAM" id="SSF50249">
    <property type="entry name" value="Nucleic acid-binding proteins"/>
    <property type="match status" value="1"/>
</dbReference>
<dbReference type="SUPFAM" id="SSF47781">
    <property type="entry name" value="RuvA domain 2-like"/>
    <property type="match status" value="1"/>
</dbReference>
<feature type="chain" id="PRO_1000002440" description="Holliday junction branch migration complex subunit RuvA">
    <location>
        <begin position="1"/>
        <end position="202"/>
    </location>
</feature>
<feature type="region of interest" description="Domain I" evidence="1">
    <location>
        <begin position="1"/>
        <end position="65"/>
    </location>
</feature>
<feature type="region of interest" description="Domain II" evidence="1">
    <location>
        <begin position="66"/>
        <end position="144"/>
    </location>
</feature>
<feature type="region of interest" description="Flexible linker" evidence="1">
    <location>
        <begin position="145"/>
        <end position="155"/>
    </location>
</feature>
<feature type="region of interest" description="Domain III" evidence="1">
    <location>
        <begin position="155"/>
        <end position="202"/>
    </location>
</feature>